<name>DNLJ_SULAA</name>
<accession>C1DW63</accession>
<gene>
    <name evidence="1" type="primary">ligA</name>
    <name type="ordered locus">SULAZ_1383</name>
</gene>
<comment type="function">
    <text evidence="1">DNA ligase that catalyzes the formation of phosphodiester linkages between 5'-phosphoryl and 3'-hydroxyl groups in double-stranded DNA using NAD as a coenzyme and as the energy source for the reaction. It is essential for DNA replication and repair of damaged DNA.</text>
</comment>
<comment type="catalytic activity">
    <reaction evidence="1">
        <text>NAD(+) + (deoxyribonucleotide)n-3'-hydroxyl + 5'-phospho-(deoxyribonucleotide)m = (deoxyribonucleotide)n+m + AMP + beta-nicotinamide D-nucleotide.</text>
        <dbReference type="EC" id="6.5.1.2"/>
    </reaction>
</comment>
<comment type="cofactor">
    <cofactor evidence="1">
        <name>Mg(2+)</name>
        <dbReference type="ChEBI" id="CHEBI:18420"/>
    </cofactor>
    <cofactor evidence="1">
        <name>Mn(2+)</name>
        <dbReference type="ChEBI" id="CHEBI:29035"/>
    </cofactor>
</comment>
<comment type="similarity">
    <text evidence="1">Belongs to the NAD-dependent DNA ligase family. LigA subfamily.</text>
</comment>
<evidence type="ECO:0000255" key="1">
    <source>
        <dbReference type="HAMAP-Rule" id="MF_01588"/>
    </source>
</evidence>
<organism>
    <name type="scientific">Sulfurihydrogenibium azorense (strain DSM 15241 / OCM 825 / Az-Fu1)</name>
    <dbReference type="NCBI Taxonomy" id="204536"/>
    <lineage>
        <taxon>Bacteria</taxon>
        <taxon>Pseudomonadati</taxon>
        <taxon>Aquificota</taxon>
        <taxon>Aquificia</taxon>
        <taxon>Aquificales</taxon>
        <taxon>Hydrogenothermaceae</taxon>
        <taxon>Sulfurihydrogenibium</taxon>
    </lineage>
</organism>
<protein>
    <recommendedName>
        <fullName evidence="1">DNA ligase</fullName>
        <ecNumber evidence="1">6.5.1.2</ecNumber>
    </recommendedName>
    <alternativeName>
        <fullName evidence="1">Polydeoxyribonucleotide synthase [NAD(+)]</fullName>
    </alternativeName>
</protein>
<proteinExistence type="inferred from homology"/>
<keyword id="KW-0227">DNA damage</keyword>
<keyword id="KW-0234">DNA repair</keyword>
<keyword id="KW-0235">DNA replication</keyword>
<keyword id="KW-0436">Ligase</keyword>
<keyword id="KW-0460">Magnesium</keyword>
<keyword id="KW-0464">Manganese</keyword>
<keyword id="KW-0479">Metal-binding</keyword>
<keyword id="KW-0520">NAD</keyword>
<keyword id="KW-1185">Reference proteome</keyword>
<keyword id="KW-0862">Zinc</keyword>
<sequence>MYSEETQRKLIEKTREFLNLDIKSIDRKKAESIIEDLREVIRFHDWRYYVLAQPVISDYEYDKLFKLLKDIESKYPDLITPDSPTQRVPSEITKVFPQVKHLTPMLSLDNSYNEADLRDFDRRVRELTGLEKIEYAVEPKFDGAGISLIYEKDLFKRGATRGDGEVGEDITNNLKVIKSIPLSAKFSSYGIDKVEIRGEVLIRKDIFKRINEQRLEEGLPLFANPRNAAAGSIRLQDPKEVAKRGLEAFVYQITYAEKDGKNLLGTVLKKHSDNIKMLHLLGFKTPYEVLKVCNGIDEVIDYCREWERKRDNYPYEIDGMVIKVNDISLYEKLGFTSHHPRWAIAYKFKARQATTKIIDVVFQVGRTGAITPVAKLQPVEIGGVIVSSVSLFNEDFIREKDIRIGDTVLVERAGDVIPYVVMVIKEARTGNEKPIEFPKNCPSCGSPLVKPLGEAVYRCININCPAQVIERIIHFASKDAMDIKGLSEATVKKFYKLGLLKSIPDIYRLDFRIIKNIQGFGEKSVNNLKQAIEESKNRPLYRLIYGLGIRYVGEVTAKTLASAVNCLEDLKNFTITDLMKLPDIGDKVATEIYNFFHNEQNLKMIQQLKELGVNVCNPKEEKRGKLAGLNFVFTGALKCCSREKAKEIVESLGGNVLDTVSKKVHYLVVGEEPGSKLQKAQKIPTIKIINEEEFLKMIGQQ</sequence>
<feature type="chain" id="PRO_0000380489" description="DNA ligase">
    <location>
        <begin position="1"/>
        <end position="701"/>
    </location>
</feature>
<feature type="domain" description="BRCT" evidence="1">
    <location>
        <begin position="621"/>
        <end position="701"/>
    </location>
</feature>
<feature type="active site" description="N6-AMP-lysine intermediate" evidence="1">
    <location>
        <position position="140"/>
    </location>
</feature>
<feature type="binding site" evidence="1">
    <location>
        <begin position="58"/>
        <end position="62"/>
    </location>
    <ligand>
        <name>NAD(+)</name>
        <dbReference type="ChEBI" id="CHEBI:57540"/>
    </ligand>
</feature>
<feature type="binding site" evidence="1">
    <location>
        <begin position="107"/>
        <end position="108"/>
    </location>
    <ligand>
        <name>NAD(+)</name>
        <dbReference type="ChEBI" id="CHEBI:57540"/>
    </ligand>
</feature>
<feature type="binding site" evidence="1">
    <location>
        <position position="138"/>
    </location>
    <ligand>
        <name>NAD(+)</name>
        <dbReference type="ChEBI" id="CHEBI:57540"/>
    </ligand>
</feature>
<feature type="binding site" evidence="1">
    <location>
        <position position="161"/>
    </location>
    <ligand>
        <name>NAD(+)</name>
        <dbReference type="ChEBI" id="CHEBI:57540"/>
    </ligand>
</feature>
<feature type="binding site" evidence="1">
    <location>
        <position position="199"/>
    </location>
    <ligand>
        <name>NAD(+)</name>
        <dbReference type="ChEBI" id="CHEBI:57540"/>
    </ligand>
</feature>
<feature type="binding site" evidence="1">
    <location>
        <position position="323"/>
    </location>
    <ligand>
        <name>NAD(+)</name>
        <dbReference type="ChEBI" id="CHEBI:57540"/>
    </ligand>
</feature>
<feature type="binding site" evidence="1">
    <location>
        <position position="347"/>
    </location>
    <ligand>
        <name>NAD(+)</name>
        <dbReference type="ChEBI" id="CHEBI:57540"/>
    </ligand>
</feature>
<feature type="binding site" evidence="1">
    <location>
        <position position="441"/>
    </location>
    <ligand>
        <name>Zn(2+)</name>
        <dbReference type="ChEBI" id="CHEBI:29105"/>
    </ligand>
</feature>
<feature type="binding site" evidence="1">
    <location>
        <position position="444"/>
    </location>
    <ligand>
        <name>Zn(2+)</name>
        <dbReference type="ChEBI" id="CHEBI:29105"/>
    </ligand>
</feature>
<feature type="binding site" evidence="1">
    <location>
        <position position="459"/>
    </location>
    <ligand>
        <name>Zn(2+)</name>
        <dbReference type="ChEBI" id="CHEBI:29105"/>
    </ligand>
</feature>
<feature type="binding site" evidence="1">
    <location>
        <position position="464"/>
    </location>
    <ligand>
        <name>Zn(2+)</name>
        <dbReference type="ChEBI" id="CHEBI:29105"/>
    </ligand>
</feature>
<reference key="1">
    <citation type="journal article" date="2009" name="J. Bacteriol.">
        <title>Complete and draft genome sequences of six members of the Aquificales.</title>
        <authorList>
            <person name="Reysenbach A.-L."/>
            <person name="Hamamura N."/>
            <person name="Podar M."/>
            <person name="Griffiths E."/>
            <person name="Ferreira S."/>
            <person name="Hochstein R."/>
            <person name="Heidelberg J."/>
            <person name="Johnson J."/>
            <person name="Mead D."/>
            <person name="Pohorille A."/>
            <person name="Sarmiento M."/>
            <person name="Schweighofer K."/>
            <person name="Seshadri R."/>
            <person name="Voytek M.A."/>
        </authorList>
    </citation>
    <scope>NUCLEOTIDE SEQUENCE [LARGE SCALE GENOMIC DNA]</scope>
    <source>
        <strain>DSM 15241 / OCM 825 / Az-Fu1</strain>
    </source>
</reference>
<dbReference type="EC" id="6.5.1.2" evidence="1"/>
<dbReference type="EMBL" id="CP001229">
    <property type="protein sequence ID" value="ACN99112.1"/>
    <property type="molecule type" value="Genomic_DNA"/>
</dbReference>
<dbReference type="RefSeq" id="WP_012674431.1">
    <property type="nucleotide sequence ID" value="NC_012438.1"/>
</dbReference>
<dbReference type="SMR" id="C1DW63"/>
<dbReference type="STRING" id="204536.SULAZ_1383"/>
<dbReference type="KEGG" id="saf:SULAZ_1383"/>
<dbReference type="eggNOG" id="COG0272">
    <property type="taxonomic scope" value="Bacteria"/>
</dbReference>
<dbReference type="HOGENOM" id="CLU_007764_2_1_0"/>
<dbReference type="OrthoDB" id="9759736at2"/>
<dbReference type="Proteomes" id="UP000001369">
    <property type="component" value="Chromosome"/>
</dbReference>
<dbReference type="GO" id="GO:0005829">
    <property type="term" value="C:cytosol"/>
    <property type="evidence" value="ECO:0007669"/>
    <property type="project" value="TreeGrafter"/>
</dbReference>
<dbReference type="GO" id="GO:0003677">
    <property type="term" value="F:DNA binding"/>
    <property type="evidence" value="ECO:0007669"/>
    <property type="project" value="InterPro"/>
</dbReference>
<dbReference type="GO" id="GO:0003911">
    <property type="term" value="F:DNA ligase (NAD+) activity"/>
    <property type="evidence" value="ECO:0007669"/>
    <property type="project" value="UniProtKB-UniRule"/>
</dbReference>
<dbReference type="GO" id="GO:0046872">
    <property type="term" value="F:metal ion binding"/>
    <property type="evidence" value="ECO:0007669"/>
    <property type="project" value="UniProtKB-KW"/>
</dbReference>
<dbReference type="GO" id="GO:0006281">
    <property type="term" value="P:DNA repair"/>
    <property type="evidence" value="ECO:0007669"/>
    <property type="project" value="UniProtKB-KW"/>
</dbReference>
<dbReference type="GO" id="GO:0006260">
    <property type="term" value="P:DNA replication"/>
    <property type="evidence" value="ECO:0007669"/>
    <property type="project" value="UniProtKB-KW"/>
</dbReference>
<dbReference type="CDD" id="cd17748">
    <property type="entry name" value="BRCT_DNA_ligase_like"/>
    <property type="match status" value="1"/>
</dbReference>
<dbReference type="CDD" id="cd00114">
    <property type="entry name" value="LIGANc"/>
    <property type="match status" value="1"/>
</dbReference>
<dbReference type="FunFam" id="1.10.150.20:FF:000006">
    <property type="entry name" value="DNA ligase"/>
    <property type="match status" value="1"/>
</dbReference>
<dbReference type="FunFam" id="1.10.150.20:FF:000007">
    <property type="entry name" value="DNA ligase"/>
    <property type="match status" value="1"/>
</dbReference>
<dbReference type="FunFam" id="2.40.50.140:FF:000012">
    <property type="entry name" value="DNA ligase"/>
    <property type="match status" value="1"/>
</dbReference>
<dbReference type="FunFam" id="3.30.470.30:FF:000001">
    <property type="entry name" value="DNA ligase"/>
    <property type="match status" value="1"/>
</dbReference>
<dbReference type="Gene3D" id="6.20.10.30">
    <property type="match status" value="1"/>
</dbReference>
<dbReference type="Gene3D" id="1.10.150.20">
    <property type="entry name" value="5' to 3' exonuclease, C-terminal subdomain"/>
    <property type="match status" value="2"/>
</dbReference>
<dbReference type="Gene3D" id="3.40.50.10190">
    <property type="entry name" value="BRCT domain"/>
    <property type="match status" value="1"/>
</dbReference>
<dbReference type="Gene3D" id="3.30.470.30">
    <property type="entry name" value="DNA ligase/mRNA capping enzyme"/>
    <property type="match status" value="1"/>
</dbReference>
<dbReference type="Gene3D" id="1.10.287.610">
    <property type="entry name" value="Helix hairpin bin"/>
    <property type="match status" value="1"/>
</dbReference>
<dbReference type="Gene3D" id="2.40.50.140">
    <property type="entry name" value="Nucleic acid-binding proteins"/>
    <property type="match status" value="1"/>
</dbReference>
<dbReference type="HAMAP" id="MF_01588">
    <property type="entry name" value="DNA_ligase_A"/>
    <property type="match status" value="1"/>
</dbReference>
<dbReference type="InterPro" id="IPR001357">
    <property type="entry name" value="BRCT_dom"/>
</dbReference>
<dbReference type="InterPro" id="IPR036420">
    <property type="entry name" value="BRCT_dom_sf"/>
</dbReference>
<dbReference type="InterPro" id="IPR041663">
    <property type="entry name" value="DisA/LigA_HHH"/>
</dbReference>
<dbReference type="InterPro" id="IPR001679">
    <property type="entry name" value="DNA_ligase"/>
</dbReference>
<dbReference type="InterPro" id="IPR018239">
    <property type="entry name" value="DNA_ligase_AS"/>
</dbReference>
<dbReference type="InterPro" id="IPR033136">
    <property type="entry name" value="DNA_ligase_CS"/>
</dbReference>
<dbReference type="InterPro" id="IPR013839">
    <property type="entry name" value="DNAligase_adenylation"/>
</dbReference>
<dbReference type="InterPro" id="IPR013840">
    <property type="entry name" value="DNAligase_N"/>
</dbReference>
<dbReference type="InterPro" id="IPR003583">
    <property type="entry name" value="Hlx-hairpin-Hlx_DNA-bd_motif"/>
</dbReference>
<dbReference type="InterPro" id="IPR012340">
    <property type="entry name" value="NA-bd_OB-fold"/>
</dbReference>
<dbReference type="InterPro" id="IPR004150">
    <property type="entry name" value="NAD_DNA_ligase_OB"/>
</dbReference>
<dbReference type="InterPro" id="IPR010994">
    <property type="entry name" value="RuvA_2-like"/>
</dbReference>
<dbReference type="InterPro" id="IPR004149">
    <property type="entry name" value="Znf_DNAligase_C4"/>
</dbReference>
<dbReference type="NCBIfam" id="TIGR00575">
    <property type="entry name" value="dnlj"/>
    <property type="match status" value="1"/>
</dbReference>
<dbReference type="NCBIfam" id="NF005932">
    <property type="entry name" value="PRK07956.1"/>
    <property type="match status" value="1"/>
</dbReference>
<dbReference type="PANTHER" id="PTHR23389">
    <property type="entry name" value="CHROMOSOME TRANSMISSION FIDELITY FACTOR 18"/>
    <property type="match status" value="1"/>
</dbReference>
<dbReference type="PANTHER" id="PTHR23389:SF9">
    <property type="entry name" value="DNA LIGASE"/>
    <property type="match status" value="1"/>
</dbReference>
<dbReference type="Pfam" id="PF00533">
    <property type="entry name" value="BRCT"/>
    <property type="match status" value="1"/>
</dbReference>
<dbReference type="Pfam" id="PF01653">
    <property type="entry name" value="DNA_ligase_aden"/>
    <property type="match status" value="1"/>
</dbReference>
<dbReference type="Pfam" id="PF03120">
    <property type="entry name" value="DNA_ligase_OB"/>
    <property type="match status" value="1"/>
</dbReference>
<dbReference type="Pfam" id="PF03119">
    <property type="entry name" value="DNA_ligase_ZBD"/>
    <property type="match status" value="1"/>
</dbReference>
<dbReference type="Pfam" id="PF12826">
    <property type="entry name" value="HHH_2"/>
    <property type="match status" value="1"/>
</dbReference>
<dbReference type="Pfam" id="PF14520">
    <property type="entry name" value="HHH_5"/>
    <property type="match status" value="1"/>
</dbReference>
<dbReference type="Pfam" id="PF22745">
    <property type="entry name" value="Nlig-Ia"/>
    <property type="match status" value="1"/>
</dbReference>
<dbReference type="PIRSF" id="PIRSF001604">
    <property type="entry name" value="LigA"/>
    <property type="match status" value="1"/>
</dbReference>
<dbReference type="SMART" id="SM00292">
    <property type="entry name" value="BRCT"/>
    <property type="match status" value="1"/>
</dbReference>
<dbReference type="SMART" id="SM00278">
    <property type="entry name" value="HhH1"/>
    <property type="match status" value="3"/>
</dbReference>
<dbReference type="SMART" id="SM00532">
    <property type="entry name" value="LIGANc"/>
    <property type="match status" value="1"/>
</dbReference>
<dbReference type="SUPFAM" id="SSF52113">
    <property type="entry name" value="BRCT domain"/>
    <property type="match status" value="1"/>
</dbReference>
<dbReference type="SUPFAM" id="SSF56091">
    <property type="entry name" value="DNA ligase/mRNA capping enzyme, catalytic domain"/>
    <property type="match status" value="1"/>
</dbReference>
<dbReference type="SUPFAM" id="SSF50249">
    <property type="entry name" value="Nucleic acid-binding proteins"/>
    <property type="match status" value="1"/>
</dbReference>
<dbReference type="SUPFAM" id="SSF47781">
    <property type="entry name" value="RuvA domain 2-like"/>
    <property type="match status" value="1"/>
</dbReference>
<dbReference type="PROSITE" id="PS50172">
    <property type="entry name" value="BRCT"/>
    <property type="match status" value="1"/>
</dbReference>
<dbReference type="PROSITE" id="PS01055">
    <property type="entry name" value="DNA_LIGASE_N1"/>
    <property type="match status" value="1"/>
</dbReference>
<dbReference type="PROSITE" id="PS01056">
    <property type="entry name" value="DNA_LIGASE_N2"/>
    <property type="match status" value="1"/>
</dbReference>